<organism>
    <name type="scientific">Corynebacterium glutamicum (strain R)</name>
    <dbReference type="NCBI Taxonomy" id="340322"/>
    <lineage>
        <taxon>Bacteria</taxon>
        <taxon>Bacillati</taxon>
        <taxon>Actinomycetota</taxon>
        <taxon>Actinomycetes</taxon>
        <taxon>Mycobacteriales</taxon>
        <taxon>Corynebacteriaceae</taxon>
        <taxon>Corynebacterium</taxon>
    </lineage>
</organism>
<name>RF2_CORGB</name>
<proteinExistence type="inferred from homology"/>
<gene>
    <name evidence="1" type="primary">prfB</name>
    <name type="ordered locus">cgR_0906</name>
</gene>
<dbReference type="EMBL" id="AP009044">
    <property type="protein sequence ID" value="BAF53880.1"/>
    <property type="molecule type" value="Genomic_DNA"/>
</dbReference>
<dbReference type="RefSeq" id="WP_003863507.1">
    <property type="nucleotide sequence ID" value="NC_009342.1"/>
</dbReference>
<dbReference type="SMR" id="A4QCD3"/>
<dbReference type="GeneID" id="1018796"/>
<dbReference type="KEGG" id="cgt:cgR_0906"/>
<dbReference type="HOGENOM" id="CLU_036856_6_0_11"/>
<dbReference type="PhylomeDB" id="A4QCD3"/>
<dbReference type="Proteomes" id="UP000006698">
    <property type="component" value="Chromosome"/>
</dbReference>
<dbReference type="GO" id="GO:0005737">
    <property type="term" value="C:cytoplasm"/>
    <property type="evidence" value="ECO:0007669"/>
    <property type="project" value="UniProtKB-SubCell"/>
</dbReference>
<dbReference type="GO" id="GO:0016149">
    <property type="term" value="F:translation release factor activity, codon specific"/>
    <property type="evidence" value="ECO:0007669"/>
    <property type="project" value="UniProtKB-UniRule"/>
</dbReference>
<dbReference type="FunFam" id="3.30.160.20:FF:000010">
    <property type="entry name" value="Peptide chain release factor 2"/>
    <property type="match status" value="1"/>
</dbReference>
<dbReference type="Gene3D" id="3.30.160.20">
    <property type="match status" value="1"/>
</dbReference>
<dbReference type="Gene3D" id="3.30.70.1660">
    <property type="match status" value="1"/>
</dbReference>
<dbReference type="Gene3D" id="1.20.58.410">
    <property type="entry name" value="Release factor"/>
    <property type="match status" value="1"/>
</dbReference>
<dbReference type="HAMAP" id="MF_00094">
    <property type="entry name" value="Rel_fac_2"/>
    <property type="match status" value="1"/>
</dbReference>
<dbReference type="InterPro" id="IPR005139">
    <property type="entry name" value="PCRF"/>
</dbReference>
<dbReference type="InterPro" id="IPR000352">
    <property type="entry name" value="Pep_chain_release_fac_I"/>
</dbReference>
<dbReference type="InterPro" id="IPR045853">
    <property type="entry name" value="Pep_chain_release_fac_I_sf"/>
</dbReference>
<dbReference type="InterPro" id="IPR004374">
    <property type="entry name" value="PrfB"/>
</dbReference>
<dbReference type="NCBIfam" id="TIGR00020">
    <property type="entry name" value="prfB"/>
    <property type="match status" value="1"/>
</dbReference>
<dbReference type="PANTHER" id="PTHR43116:SF3">
    <property type="entry name" value="CLASS I PEPTIDE CHAIN RELEASE FACTOR"/>
    <property type="match status" value="1"/>
</dbReference>
<dbReference type="PANTHER" id="PTHR43116">
    <property type="entry name" value="PEPTIDE CHAIN RELEASE FACTOR 2"/>
    <property type="match status" value="1"/>
</dbReference>
<dbReference type="Pfam" id="PF03462">
    <property type="entry name" value="PCRF"/>
    <property type="match status" value="1"/>
</dbReference>
<dbReference type="Pfam" id="PF00472">
    <property type="entry name" value="RF-1"/>
    <property type="match status" value="1"/>
</dbReference>
<dbReference type="SMART" id="SM00937">
    <property type="entry name" value="PCRF"/>
    <property type="match status" value="1"/>
</dbReference>
<dbReference type="SUPFAM" id="SSF75620">
    <property type="entry name" value="Release factor"/>
    <property type="match status" value="1"/>
</dbReference>
<dbReference type="PROSITE" id="PS00745">
    <property type="entry name" value="RF_PROK_I"/>
    <property type="match status" value="1"/>
</dbReference>
<evidence type="ECO:0000255" key="1">
    <source>
        <dbReference type="HAMAP-Rule" id="MF_00094"/>
    </source>
</evidence>
<protein>
    <recommendedName>
        <fullName evidence="1">Peptide chain release factor 2</fullName>
        <shortName evidence="1">RF-2</shortName>
    </recommendedName>
</protein>
<accession>A4QCD3</accession>
<comment type="function">
    <text evidence="1">Peptide chain release factor 2 directs the termination of translation in response to the peptide chain termination codons UGA and UAA.</text>
</comment>
<comment type="subcellular location">
    <subcellularLocation>
        <location evidence="1">Cytoplasm</location>
    </subcellularLocation>
</comment>
<comment type="PTM">
    <text evidence="1">Methylated by PrmC. Methylation increases the termination efficiency of RF2.</text>
</comment>
<comment type="similarity">
    <text evidence="1">Belongs to the prokaryotic/mitochondrial release factor family.</text>
</comment>
<keyword id="KW-0963">Cytoplasm</keyword>
<keyword id="KW-0488">Methylation</keyword>
<keyword id="KW-0648">Protein biosynthesis</keyword>
<feature type="chain" id="PRO_1000004986" description="Peptide chain release factor 2">
    <location>
        <begin position="1"/>
        <end position="368"/>
    </location>
</feature>
<feature type="modified residue" description="N5-methylglutamine" evidence="1">
    <location>
        <position position="248"/>
    </location>
</feature>
<reference key="1">
    <citation type="journal article" date="2007" name="Microbiology">
        <title>Comparative analysis of the Corynebacterium glutamicum group and complete genome sequence of strain R.</title>
        <authorList>
            <person name="Yukawa H."/>
            <person name="Omumasaba C.A."/>
            <person name="Nonaka H."/>
            <person name="Kos P."/>
            <person name="Okai N."/>
            <person name="Suzuki N."/>
            <person name="Suda M."/>
            <person name="Tsuge Y."/>
            <person name="Watanabe J."/>
            <person name="Ikeda Y."/>
            <person name="Vertes A.A."/>
            <person name="Inui M."/>
        </authorList>
    </citation>
    <scope>NUCLEOTIDE SEQUENCE [LARGE SCALE GENOMIC DNA]</scope>
    <source>
        <strain>R</strain>
    </source>
</reference>
<sequence>MRPEFSAELSELDSTLTTIEKVLNPQEMSDRVRELEAQAADPSLWDDPDHAQQVTSELSHVQAELRKITDLRQRIEDLPIMVELAEEEDGDTSIAEEELADLRSLIDALEVKTMLSGEYDAREAVINIRSGAGGVDAADWAEMLMRMYTRWAEKNGHKVDIYDISYAEEAGIKSATFVVHGDYMYGQLSVEQGAHRLVRISPFDNQGRRQTSFAEVEVLPVVEKVDSIDIPDADVRVDVYRSSGPGGQSVNTTDSAVRLTHIPTGIVVTCQNEKSQIQNKASAMRVLQAKLLERKRQEERAEMDALGAGGNASWGNQMRSYVLHPYQMVKDLRTNFEVNDPQKVLDGDIDGLLEAGIRWRMAESQSAE</sequence>